<keyword id="KW-0227">DNA damage</keyword>
<keyword id="KW-0234">DNA repair</keyword>
<keyword id="KW-0378">Hydrolase</keyword>
<keyword id="KW-0460">Magnesium</keyword>
<keyword id="KW-0479">Metal-binding</keyword>
<keyword id="KW-0539">Nucleus</keyword>
<keyword id="KW-1185">Reference proteome</keyword>
<reference key="1">
    <citation type="journal article" date="2000" name="Nature">
        <title>Sequence and analysis of chromosome 3 of the plant Arabidopsis thaliana.</title>
        <authorList>
            <person name="Salanoubat M."/>
            <person name="Lemcke K."/>
            <person name="Rieger M."/>
            <person name="Ansorge W."/>
            <person name="Unseld M."/>
            <person name="Fartmann B."/>
            <person name="Valle G."/>
            <person name="Bloecker H."/>
            <person name="Perez-Alonso M."/>
            <person name="Obermaier B."/>
            <person name="Delseny M."/>
            <person name="Boutry M."/>
            <person name="Grivell L.A."/>
            <person name="Mache R."/>
            <person name="Puigdomenech P."/>
            <person name="De Simone V."/>
            <person name="Choisne N."/>
            <person name="Artiguenave F."/>
            <person name="Robert C."/>
            <person name="Brottier P."/>
            <person name="Wincker P."/>
            <person name="Cattolico L."/>
            <person name="Weissenbach J."/>
            <person name="Saurin W."/>
            <person name="Quetier F."/>
            <person name="Schaefer M."/>
            <person name="Mueller-Auer S."/>
            <person name="Gabel C."/>
            <person name="Fuchs M."/>
            <person name="Benes V."/>
            <person name="Wurmbach E."/>
            <person name="Drzonek H."/>
            <person name="Erfle H."/>
            <person name="Jordan N."/>
            <person name="Bangert S."/>
            <person name="Wiedelmann R."/>
            <person name="Kranz H."/>
            <person name="Voss H."/>
            <person name="Holland R."/>
            <person name="Brandt P."/>
            <person name="Nyakatura G."/>
            <person name="Vezzi A."/>
            <person name="D'Angelo M."/>
            <person name="Pallavicini A."/>
            <person name="Toppo S."/>
            <person name="Simionati B."/>
            <person name="Conrad A."/>
            <person name="Hornischer K."/>
            <person name="Kauer G."/>
            <person name="Loehnert T.-H."/>
            <person name="Nordsiek G."/>
            <person name="Reichelt J."/>
            <person name="Scharfe M."/>
            <person name="Schoen O."/>
            <person name="Bargues M."/>
            <person name="Terol J."/>
            <person name="Climent J."/>
            <person name="Navarro P."/>
            <person name="Collado C."/>
            <person name="Perez-Perez A."/>
            <person name="Ottenwaelder B."/>
            <person name="Duchemin D."/>
            <person name="Cooke R."/>
            <person name="Laudie M."/>
            <person name="Berger-Llauro C."/>
            <person name="Purnelle B."/>
            <person name="Masuy D."/>
            <person name="de Haan M."/>
            <person name="Maarse A.C."/>
            <person name="Alcaraz J.-P."/>
            <person name="Cottet A."/>
            <person name="Casacuberta E."/>
            <person name="Monfort A."/>
            <person name="Argiriou A."/>
            <person name="Flores M."/>
            <person name="Liguori R."/>
            <person name="Vitale D."/>
            <person name="Mannhaupt G."/>
            <person name="Haase D."/>
            <person name="Schoof H."/>
            <person name="Rudd S."/>
            <person name="Zaccaria P."/>
            <person name="Mewes H.-W."/>
            <person name="Mayer K.F.X."/>
            <person name="Kaul S."/>
            <person name="Town C.D."/>
            <person name="Koo H.L."/>
            <person name="Tallon L.J."/>
            <person name="Jenkins J."/>
            <person name="Rooney T."/>
            <person name="Rizzo M."/>
            <person name="Walts A."/>
            <person name="Utterback T."/>
            <person name="Fujii C.Y."/>
            <person name="Shea T.P."/>
            <person name="Creasy T.H."/>
            <person name="Haas B."/>
            <person name="Maiti R."/>
            <person name="Wu D."/>
            <person name="Peterson J."/>
            <person name="Van Aken S."/>
            <person name="Pai G."/>
            <person name="Militscher J."/>
            <person name="Sellers P."/>
            <person name="Gill J.E."/>
            <person name="Feldblyum T.V."/>
            <person name="Preuss D."/>
            <person name="Lin X."/>
            <person name="Nierman W.C."/>
            <person name="Salzberg S.L."/>
            <person name="White O."/>
            <person name="Venter J.C."/>
            <person name="Fraser C.M."/>
            <person name="Kaneko T."/>
            <person name="Nakamura Y."/>
            <person name="Sato S."/>
            <person name="Kato T."/>
            <person name="Asamizu E."/>
            <person name="Sasamoto S."/>
            <person name="Kimura T."/>
            <person name="Idesawa K."/>
            <person name="Kawashima K."/>
            <person name="Kishida Y."/>
            <person name="Kiyokawa C."/>
            <person name="Kohara M."/>
            <person name="Matsumoto M."/>
            <person name="Matsuno A."/>
            <person name="Muraki A."/>
            <person name="Nakayama S."/>
            <person name="Nakazaki N."/>
            <person name="Shinpo S."/>
            <person name="Takeuchi C."/>
            <person name="Wada T."/>
            <person name="Watanabe A."/>
            <person name="Yamada M."/>
            <person name="Yasuda M."/>
            <person name="Tabata S."/>
        </authorList>
    </citation>
    <scope>NUCLEOTIDE SEQUENCE [LARGE SCALE GENOMIC DNA]</scope>
    <source>
        <strain>cv. Columbia</strain>
    </source>
</reference>
<reference key="2">
    <citation type="journal article" date="2017" name="Plant J.">
        <title>Araport11: a complete reannotation of the Arabidopsis thaliana reference genome.</title>
        <authorList>
            <person name="Cheng C.Y."/>
            <person name="Krishnakumar V."/>
            <person name="Chan A.P."/>
            <person name="Thibaud-Nissen F."/>
            <person name="Schobel S."/>
            <person name="Town C.D."/>
        </authorList>
    </citation>
    <scope>GENOME REANNOTATION</scope>
    <source>
        <strain>cv. Columbia</strain>
    </source>
</reference>
<reference key="3">
    <citation type="submission" date="2004-11" db="EMBL/GenBank/DDBJ databases">
        <title>Arabidopsis ORF clones.</title>
        <authorList>
            <person name="Shinn P."/>
            <person name="Chen H."/>
            <person name="Cheuk R.F."/>
            <person name="Kim C.J."/>
            <person name="Ecker J.R."/>
        </authorList>
    </citation>
    <scope>NUCLEOTIDE SEQUENCE [LARGE SCALE MRNA]</scope>
    <source>
        <strain>cv. Columbia</strain>
    </source>
</reference>
<reference key="4">
    <citation type="journal article" date="2009" name="PLoS ONE">
        <title>Requirement for abasic endonuclease gene homologues in Arabidopsis seed development.</title>
        <authorList>
            <person name="Murphy T.M."/>
            <person name="Belmonte M."/>
            <person name="Shu S."/>
            <person name="Britt A.B."/>
            <person name="Hatteroth J."/>
        </authorList>
    </citation>
    <scope>FUNCTION</scope>
    <scope>DISRUPTION PHENOTYPE</scope>
</reference>
<reference key="5">
    <citation type="journal article" date="2014" name="Nucleic Acids Res.">
        <title>AP endonucleases process 5-methylcytosine excision intermediates during active DNA demethylation in Arabidopsis.</title>
        <authorList>
            <person name="Lee J."/>
            <person name="Jang H."/>
            <person name="Shin H."/>
            <person name="Choi W.L."/>
            <person name="Mok Y.G."/>
            <person name="Huh J.H."/>
        </authorList>
    </citation>
    <scope>FUNCTION</scope>
    <scope>TISSUE SPECIFICITY</scope>
    <scope>CATALYTIC ACTIVITY</scope>
    <scope>COFACTOR</scope>
    <scope>DNA-BINDING</scope>
</reference>
<reference key="6">
    <citation type="journal article" date="2015" name="PLoS Genet.">
        <title>An AP endonuclease functions in active DNA dimethylation and gene imprinting in Arabidopsis.</title>
        <authorList>
            <person name="Li Y."/>
            <person name="Cordoba-Canero D."/>
            <person name="Qian W."/>
            <person name="Zhu X."/>
            <person name="Tang K."/>
            <person name="Zhang H."/>
            <person name="Ariza R.R."/>
            <person name="Roldan-Arjona T."/>
            <person name="Zhu J.K."/>
        </authorList>
    </citation>
    <scope>FUNCTION</scope>
    <scope>CATALYTIC ACTIVITY</scope>
    <scope>COFACTOR</scope>
    <scope>MUTAGENESIS OF ASN-224</scope>
    <scope>INTERACTION WITH ROS1</scope>
    <scope>SUBCELLULAR LOCATION</scope>
    <scope>DISRUPTION PHENOTYPE</scope>
</reference>
<evidence type="ECO:0000250" key="1">
    <source>
        <dbReference type="UniProtKB" id="P27695"/>
    </source>
</evidence>
<evidence type="ECO:0000255" key="2">
    <source>
        <dbReference type="PROSITE-ProRule" id="PRU00764"/>
    </source>
</evidence>
<evidence type="ECO:0000256" key="3">
    <source>
        <dbReference type="SAM" id="MobiDB-lite"/>
    </source>
</evidence>
<evidence type="ECO:0000269" key="4">
    <source>
    </source>
</evidence>
<evidence type="ECO:0000269" key="5">
    <source>
    </source>
</evidence>
<evidence type="ECO:0000269" key="6">
    <source>
    </source>
</evidence>
<evidence type="ECO:0000303" key="7">
    <source>
    </source>
</evidence>
<evidence type="ECO:0000305" key="8"/>
<evidence type="ECO:0000312" key="9">
    <source>
        <dbReference type="Araport" id="AT3G48425"/>
    </source>
</evidence>
<evidence type="ECO:0000312" key="10">
    <source>
        <dbReference type="EMBL" id="CAB41156.1"/>
    </source>
</evidence>
<feature type="chain" id="PRO_0000424316" description="DNA-(apurinic or apyrimidinic site) endonuclease">
    <location>
        <begin position="1"/>
        <end position="364"/>
    </location>
</feature>
<feature type="region of interest" description="Disordered" evidence="3">
    <location>
        <begin position="1"/>
        <end position="42"/>
    </location>
</feature>
<feature type="compositionally biased region" description="Basic and acidic residues" evidence="3">
    <location>
        <begin position="1"/>
        <end position="12"/>
    </location>
</feature>
<feature type="compositionally biased region" description="Basic and acidic residues" evidence="3">
    <location>
        <begin position="23"/>
        <end position="39"/>
    </location>
</feature>
<feature type="active site" evidence="1">
    <location>
        <position position="182"/>
    </location>
</feature>
<feature type="active site" description="Proton donor/acceptor" evidence="1">
    <location>
        <position position="222"/>
    </location>
</feature>
<feature type="binding site" evidence="1">
    <location>
        <position position="80"/>
    </location>
    <ligand>
        <name>Mg(2+)</name>
        <dbReference type="ChEBI" id="CHEBI:18420"/>
        <label>1</label>
    </ligand>
</feature>
<feature type="binding site" evidence="1">
    <location>
        <position position="222"/>
    </location>
    <ligand>
        <name>Mg(2+)</name>
        <dbReference type="ChEBI" id="CHEBI:18420"/>
        <label>2</label>
    </ligand>
</feature>
<feature type="binding site" evidence="1">
    <location>
        <position position="224"/>
    </location>
    <ligand>
        <name>Mg(2+)</name>
        <dbReference type="ChEBI" id="CHEBI:18420"/>
        <label>2</label>
    </ligand>
</feature>
<feature type="binding site" evidence="1">
    <location>
        <position position="342"/>
    </location>
    <ligand>
        <name>Mg(2+)</name>
        <dbReference type="ChEBI" id="CHEBI:18420"/>
        <label>1</label>
    </ligand>
</feature>
<feature type="site" description="Transition state stabilizer" evidence="1">
    <location>
        <position position="224"/>
    </location>
</feature>
<feature type="site" description="Important for catalytic activity" evidence="1">
    <location>
        <position position="311"/>
    </location>
</feature>
<feature type="site" description="Interaction with DNA substrate" evidence="1">
    <location>
        <position position="343"/>
    </location>
</feature>
<feature type="mutagenesis site" description="Loss of 3'-phosphatase activity and strongly reduced AP endonuclease activity." evidence="6">
    <original>N</original>
    <variation>D</variation>
    <location>
        <position position="224"/>
    </location>
</feature>
<comment type="function">
    <text evidence="4 5 6">Apurinic/apyrimidinic (AP) endonuclease involved in active DNA demethylation and gene imprinting (PubMed:25569774). According to a report, also displays an in vitro 3'-phosphatase activity (PubMed:25569774). According to another report, has no in vitro 3'-phosphatase activity (PubMed:25228464). Catalyzes the conversion of the 3'-blocking groups 3'-phosphor-alpha,beta-unsaturated aldehyde (3'-PUA) generated by ROS1 to 3'-OH (PubMed:25228464, PubMed:25569774). Has a strong non-specific affinity to DNA (PubMed:25228464). Redundant with APE2 and at least one functional allele is required for seed viability (PubMed:19172180).</text>
</comment>
<comment type="cofactor">
    <cofactor evidence="5 6">
        <name>Mg(2+)</name>
        <dbReference type="ChEBI" id="CHEBI:18420"/>
    </cofactor>
    <text evidence="1">Probably binds two magnesium ions per subunit.</text>
</comment>
<comment type="subunit">
    <text evidence="6">Interacts with ROS1 (PubMed:25569774). ROS1 is required for APE1L to stably associate with the DNA substrate (PubMed:25569774).</text>
</comment>
<comment type="subcellular location">
    <subcellularLocation>
        <location evidence="6">Nucleus</location>
    </subcellularLocation>
    <subcellularLocation>
        <location evidence="6">Nucleus</location>
        <location evidence="6">Nucleolus</location>
    </subcellularLocation>
    <text evidence="6">Co-localizes in nucleoplasmic foci with ROS1 and ZDP, two components of the DNA demethylase machinery.</text>
</comment>
<comment type="tissue specificity">
    <text evidence="5">Expressed in leaves, flower buds and developing siliques. Not detected in roots.</text>
</comment>
<comment type="disruption phenotype">
    <text evidence="4 6">No visible phenotype (PubMed:19172180, PubMed:25569774). Ape1l ape2 double mutants are embryo lethal (PubMed:19172180). Ape1l arp double mutants have no visible phenotype (PubMed:19172180). Zdp ape1l double mutants are embryo lethal and cause DNA hypermethylation and down-regulation of imprinted genes in the endosperm (PubMed:25569774).</text>
</comment>
<comment type="similarity">
    <text evidence="2">Belongs to the DNA repair enzymes AP/exoA family.</text>
</comment>
<comment type="sequence caution" evidence="8">
    <conflict type="erroneous gene model prediction">
        <sequence resource="EMBL-CDS" id="CAB41156"/>
    </conflict>
    <text>The predicted gene has been split into 2 genes: At3g48420 and At3g48425.</text>
</comment>
<dbReference type="EC" id="3.1.-.-" evidence="5 6"/>
<dbReference type="EMBL" id="AL049659">
    <property type="protein sequence ID" value="CAB41156.1"/>
    <property type="status" value="ALT_SEQ"/>
    <property type="molecule type" value="Genomic_DNA"/>
</dbReference>
<dbReference type="EMBL" id="CP002686">
    <property type="protein sequence ID" value="AEE78415.1"/>
    <property type="molecule type" value="Genomic_DNA"/>
</dbReference>
<dbReference type="EMBL" id="BT015809">
    <property type="protein sequence ID" value="AAU94372.1"/>
    <property type="molecule type" value="mRNA"/>
</dbReference>
<dbReference type="EMBL" id="BT020215">
    <property type="protein sequence ID" value="AAV59281.1"/>
    <property type="molecule type" value="mRNA"/>
</dbReference>
<dbReference type="PIR" id="T06700">
    <property type="entry name" value="T06700"/>
</dbReference>
<dbReference type="RefSeq" id="NP_566904.2">
    <property type="nucleotide sequence ID" value="NM_114702.3"/>
</dbReference>
<dbReference type="SMR" id="Q5XF07"/>
<dbReference type="BioGRID" id="9320">
    <property type="interactions" value="1"/>
</dbReference>
<dbReference type="FunCoup" id="Q5XF07">
    <property type="interactions" value="317"/>
</dbReference>
<dbReference type="STRING" id="3702.Q5XF07"/>
<dbReference type="iPTMnet" id="Q5XF07"/>
<dbReference type="PaxDb" id="3702-AT3G48425.1"/>
<dbReference type="ProteomicsDB" id="240883"/>
<dbReference type="EnsemblPlants" id="AT3G48425.1">
    <property type="protein sequence ID" value="AT3G48425.1"/>
    <property type="gene ID" value="AT3G48425"/>
</dbReference>
<dbReference type="GeneID" id="824001"/>
<dbReference type="Gramene" id="AT3G48425.1">
    <property type="protein sequence ID" value="AT3G48425.1"/>
    <property type="gene ID" value="AT3G48425"/>
</dbReference>
<dbReference type="KEGG" id="ath:AT3G48425"/>
<dbReference type="Araport" id="AT3G48425"/>
<dbReference type="TAIR" id="AT3G48425">
    <property type="gene designation" value="APE1L"/>
</dbReference>
<dbReference type="eggNOG" id="KOG1294">
    <property type="taxonomic scope" value="Eukaryota"/>
</dbReference>
<dbReference type="HOGENOM" id="CLU_027539_6_0_1"/>
<dbReference type="InParanoid" id="Q5XF07"/>
<dbReference type="OMA" id="AFCQFVS"/>
<dbReference type="PRO" id="PR:Q5XF07"/>
<dbReference type="Proteomes" id="UP000006548">
    <property type="component" value="Chromosome 3"/>
</dbReference>
<dbReference type="ExpressionAtlas" id="Q5XF07">
    <property type="expression patterns" value="baseline and differential"/>
</dbReference>
<dbReference type="GO" id="GO:0005730">
    <property type="term" value="C:nucleolus"/>
    <property type="evidence" value="ECO:0007669"/>
    <property type="project" value="UniProtKB-SubCell"/>
</dbReference>
<dbReference type="GO" id="GO:0046872">
    <property type="term" value="F:metal ion binding"/>
    <property type="evidence" value="ECO:0007669"/>
    <property type="project" value="UniProtKB-KW"/>
</dbReference>
<dbReference type="GO" id="GO:0004518">
    <property type="term" value="F:nuclease activity"/>
    <property type="evidence" value="ECO:0007669"/>
    <property type="project" value="InterPro"/>
</dbReference>
<dbReference type="GO" id="GO:0006281">
    <property type="term" value="P:DNA repair"/>
    <property type="evidence" value="ECO:0007669"/>
    <property type="project" value="UniProtKB-KW"/>
</dbReference>
<dbReference type="CDD" id="cd09087">
    <property type="entry name" value="Ape1-like_AP-endo"/>
    <property type="match status" value="1"/>
</dbReference>
<dbReference type="FunFam" id="3.60.10.10:FF:000046">
    <property type="entry name" value="DNA-(apurinic or apyrimidinic site) lyase"/>
    <property type="match status" value="1"/>
</dbReference>
<dbReference type="Gene3D" id="3.60.10.10">
    <property type="entry name" value="Endonuclease/exonuclease/phosphatase"/>
    <property type="match status" value="1"/>
</dbReference>
<dbReference type="InterPro" id="IPR004808">
    <property type="entry name" value="AP_endonuc_1"/>
</dbReference>
<dbReference type="InterPro" id="IPR036691">
    <property type="entry name" value="Endo/exonu/phosph_ase_sf"/>
</dbReference>
<dbReference type="InterPro" id="IPR005135">
    <property type="entry name" value="Endo/exonuclease/phosphatase"/>
</dbReference>
<dbReference type="NCBIfam" id="TIGR00633">
    <property type="entry name" value="xth"/>
    <property type="match status" value="1"/>
</dbReference>
<dbReference type="PANTHER" id="PTHR22748">
    <property type="entry name" value="AP ENDONUCLEASE"/>
    <property type="match status" value="1"/>
</dbReference>
<dbReference type="PANTHER" id="PTHR22748:SF10">
    <property type="entry name" value="DNA-(APURINIC OR APYRIMIDINIC SITE) ENDONUCLEASE"/>
    <property type="match status" value="1"/>
</dbReference>
<dbReference type="Pfam" id="PF03372">
    <property type="entry name" value="Exo_endo_phos"/>
    <property type="match status" value="1"/>
</dbReference>
<dbReference type="SUPFAM" id="SSF56219">
    <property type="entry name" value="DNase I-like"/>
    <property type="match status" value="1"/>
</dbReference>
<dbReference type="PROSITE" id="PS51435">
    <property type="entry name" value="AP_NUCLEASE_F1_4"/>
    <property type="match status" value="1"/>
</dbReference>
<name>APE1L_ARATH</name>
<sequence>MKRFFKPIEKENSPAAKKPCLSPEKRDGDGDGVEEEKNQNEPSKFMTWNANSFLLRVKNDWSQFSKFVSDFDPDVIAIQEVRMPAAGGKGKPKNHEELSDDTKVLREEKQILTRALSSPPFGNYGVWWSLADSKYAGTALLVKKCFKPRKVYFNLDKLASKHEPDGRVILAEFETFRLLNTYSPNNGWKDEENAFQRRRKWDKRIVEFLNKTSDKPLIWCGDLNVSHEEIDVSHPEFFATAKLNGYVPPNKEDCGQPGFTPSERGRFGATIKEGRLVDAYRYLHKEQEMESGFSWSGNPIGKYRGKRMRIDYFLVSEQLKDRIVSCKMHGRGIELEGFHGSDHCPVTLELSKPSSEMEQNQVSN</sequence>
<accession>Q5XF07</accession>
<accession>Q9STM2</accession>
<proteinExistence type="evidence at protein level"/>
<gene>
    <name evidence="7" type="primary">APE1L</name>
    <name evidence="9" type="ordered locus">At3g48425</name>
    <name evidence="10" type="ORF">T29H11.60</name>
</gene>
<protein>
    <recommendedName>
        <fullName evidence="8">DNA-(apurinic or apyrimidinic site) endonuclease</fullName>
        <ecNumber evidence="5 6">3.1.-.-</ecNumber>
    </recommendedName>
    <alternativeName>
        <fullName evidence="7">APEX1-like protein</fullName>
    </alternativeName>
    <alternativeName>
        <fullName>Apurinic-apyrimidinic endonuclease</fullName>
    </alternativeName>
</protein>
<organism>
    <name type="scientific">Arabidopsis thaliana</name>
    <name type="common">Mouse-ear cress</name>
    <dbReference type="NCBI Taxonomy" id="3702"/>
    <lineage>
        <taxon>Eukaryota</taxon>
        <taxon>Viridiplantae</taxon>
        <taxon>Streptophyta</taxon>
        <taxon>Embryophyta</taxon>
        <taxon>Tracheophyta</taxon>
        <taxon>Spermatophyta</taxon>
        <taxon>Magnoliopsida</taxon>
        <taxon>eudicotyledons</taxon>
        <taxon>Gunneridae</taxon>
        <taxon>Pentapetalae</taxon>
        <taxon>rosids</taxon>
        <taxon>malvids</taxon>
        <taxon>Brassicales</taxon>
        <taxon>Brassicaceae</taxon>
        <taxon>Camelineae</taxon>
        <taxon>Arabidopsis</taxon>
    </lineage>
</organism>